<keyword id="KW-0028">Amino-acid biosynthesis</keyword>
<keyword id="KW-0963">Cytoplasm</keyword>
<keyword id="KW-0220">Diaminopimelate biosynthesis</keyword>
<keyword id="KW-0456">Lyase</keyword>
<keyword id="KW-0457">Lysine biosynthesis</keyword>
<keyword id="KW-0704">Schiff base</keyword>
<comment type="function">
    <text evidence="1">Catalyzes the condensation of (S)-aspartate-beta-semialdehyde [(S)-ASA] and pyruvate to 4-hydroxy-tetrahydrodipicolinate (HTPA).</text>
</comment>
<comment type="catalytic activity">
    <reaction evidence="1">
        <text>L-aspartate 4-semialdehyde + pyruvate = (2S,4S)-4-hydroxy-2,3,4,5-tetrahydrodipicolinate + H2O + H(+)</text>
        <dbReference type="Rhea" id="RHEA:34171"/>
        <dbReference type="ChEBI" id="CHEBI:15361"/>
        <dbReference type="ChEBI" id="CHEBI:15377"/>
        <dbReference type="ChEBI" id="CHEBI:15378"/>
        <dbReference type="ChEBI" id="CHEBI:67139"/>
        <dbReference type="ChEBI" id="CHEBI:537519"/>
        <dbReference type="EC" id="4.3.3.7"/>
    </reaction>
</comment>
<comment type="pathway">
    <text evidence="1">Amino-acid biosynthesis; L-lysine biosynthesis via DAP pathway; (S)-tetrahydrodipicolinate from L-aspartate: step 3/4.</text>
</comment>
<comment type="subunit">
    <text evidence="1">Homotetramer; dimer of dimers.</text>
</comment>
<comment type="subcellular location">
    <subcellularLocation>
        <location evidence="1">Cytoplasm</location>
    </subcellularLocation>
</comment>
<comment type="similarity">
    <text evidence="1">Belongs to the DapA family.</text>
</comment>
<comment type="caution">
    <text evidence="2">Was originally thought to be a dihydrodipicolinate synthase (DHDPS), catalyzing the condensation of (S)-aspartate-beta-semialdehyde [(S)-ASA] and pyruvate to dihydrodipicolinate (DHDP). However, it was shown in E.coli that the product of the enzymatic reaction is not dihydrodipicolinate but in fact (4S)-4-hydroxy-2,3,4,5-tetrahydro-(2S)-dipicolinic acid (HTPA), and that the consecutive dehydration reaction leading to DHDP is not spontaneous but catalyzed by DapB.</text>
</comment>
<gene>
    <name evidence="1" type="primary">dapA</name>
    <name type="ordered locus">CPn_1050</name>
    <name type="ordered locus">CP_0802</name>
    <name type="ordered locus">CpB1091</name>
</gene>
<evidence type="ECO:0000255" key="1">
    <source>
        <dbReference type="HAMAP-Rule" id="MF_00418"/>
    </source>
</evidence>
<evidence type="ECO:0000305" key="2"/>
<sequence length="291" mass="32317">MHLLTATVTPFFPNGTIDFASLERLLSFQDAVGNGVVLLGSTGEGLSLTKKEKQALICFACDLQLKVPLFVGTSGTLLEEVLDWIHFCNDLPISGFLMTTPIYTKPKLCGQILWFEAVLNAAKHPAILYNIPSRAATPLYLDTVKALAHHPQFLGIKDSGGSVEEFQSYKSIAPHIQLYCGDDVFWSEMAACGAHGLISVLSNAWPEEAREYVLNPQEQDYRSLWMETCRWVYTTTNPIGIKAILAYKKAITHAQLRLPLSIEDFDLENVSPAVESMLAWPKLRTSVFSYS</sequence>
<name>DAPA_CHLPN</name>
<protein>
    <recommendedName>
        <fullName evidence="1">4-hydroxy-tetrahydrodipicolinate synthase</fullName>
        <shortName evidence="1">HTPA synthase</shortName>
        <ecNumber evidence="1">4.3.3.7</ecNumber>
    </recommendedName>
</protein>
<organism>
    <name type="scientific">Chlamydia pneumoniae</name>
    <name type="common">Chlamydophila pneumoniae</name>
    <dbReference type="NCBI Taxonomy" id="83558"/>
    <lineage>
        <taxon>Bacteria</taxon>
        <taxon>Pseudomonadati</taxon>
        <taxon>Chlamydiota</taxon>
        <taxon>Chlamydiia</taxon>
        <taxon>Chlamydiales</taxon>
        <taxon>Chlamydiaceae</taxon>
        <taxon>Chlamydia/Chlamydophila group</taxon>
        <taxon>Chlamydia</taxon>
    </lineage>
</organism>
<feature type="chain" id="PRO_0000103100" description="4-hydroxy-tetrahydrodipicolinate synthase">
    <location>
        <begin position="1"/>
        <end position="291"/>
    </location>
</feature>
<feature type="active site" description="Proton donor/acceptor" evidence="1">
    <location>
        <position position="129"/>
    </location>
</feature>
<feature type="active site" description="Schiff-base intermediate with substrate" evidence="1">
    <location>
        <position position="157"/>
    </location>
</feature>
<feature type="binding site" evidence="1">
    <location>
        <position position="42"/>
    </location>
    <ligand>
        <name>pyruvate</name>
        <dbReference type="ChEBI" id="CHEBI:15361"/>
    </ligand>
</feature>
<feature type="binding site" evidence="1">
    <location>
        <position position="198"/>
    </location>
    <ligand>
        <name>pyruvate</name>
        <dbReference type="ChEBI" id="CHEBI:15361"/>
    </ligand>
</feature>
<feature type="site" description="Part of a proton relay during catalysis" evidence="1">
    <location>
        <position position="41"/>
    </location>
</feature>
<feature type="site" description="Part of a proton relay during catalysis" evidence="1">
    <location>
        <position position="103"/>
    </location>
</feature>
<accession>Q9Z6K9</accession>
<reference key="1">
    <citation type="journal article" date="1999" name="Nat. Genet.">
        <title>Comparative genomes of Chlamydia pneumoniae and C. trachomatis.</title>
        <authorList>
            <person name="Kalman S."/>
            <person name="Mitchell W.P."/>
            <person name="Marathe R."/>
            <person name="Lammel C.J."/>
            <person name="Fan J."/>
            <person name="Hyman R.W."/>
            <person name="Olinger L."/>
            <person name="Grimwood J."/>
            <person name="Davis R.W."/>
            <person name="Stephens R.S."/>
        </authorList>
    </citation>
    <scope>NUCLEOTIDE SEQUENCE [LARGE SCALE GENOMIC DNA]</scope>
    <source>
        <strain>CWL029</strain>
    </source>
</reference>
<reference key="2">
    <citation type="journal article" date="2000" name="Nucleic Acids Res.">
        <title>Genome sequences of Chlamydia trachomatis MoPn and Chlamydia pneumoniae AR39.</title>
        <authorList>
            <person name="Read T.D."/>
            <person name="Brunham R.C."/>
            <person name="Shen C."/>
            <person name="Gill S.R."/>
            <person name="Heidelberg J.F."/>
            <person name="White O."/>
            <person name="Hickey E.K."/>
            <person name="Peterson J.D."/>
            <person name="Utterback T.R."/>
            <person name="Berry K.J."/>
            <person name="Bass S."/>
            <person name="Linher K.D."/>
            <person name="Weidman J.F."/>
            <person name="Khouri H.M."/>
            <person name="Craven B."/>
            <person name="Bowman C."/>
            <person name="Dodson R.J."/>
            <person name="Gwinn M.L."/>
            <person name="Nelson W.C."/>
            <person name="DeBoy R.T."/>
            <person name="Kolonay J.F."/>
            <person name="McClarty G."/>
            <person name="Salzberg S.L."/>
            <person name="Eisen J.A."/>
            <person name="Fraser C.M."/>
        </authorList>
    </citation>
    <scope>NUCLEOTIDE SEQUENCE [LARGE SCALE GENOMIC DNA]</scope>
    <source>
        <strain>AR39</strain>
    </source>
</reference>
<reference key="3">
    <citation type="journal article" date="2000" name="Nucleic Acids Res.">
        <title>Comparison of whole genome sequences of Chlamydia pneumoniae J138 from Japan and CWL029 from USA.</title>
        <authorList>
            <person name="Shirai M."/>
            <person name="Hirakawa H."/>
            <person name="Kimoto M."/>
            <person name="Tabuchi M."/>
            <person name="Kishi F."/>
            <person name="Ouchi K."/>
            <person name="Shiba T."/>
            <person name="Ishii K."/>
            <person name="Hattori M."/>
            <person name="Kuhara S."/>
            <person name="Nakazawa T."/>
        </authorList>
    </citation>
    <scope>NUCLEOTIDE SEQUENCE [LARGE SCALE GENOMIC DNA]</scope>
    <source>
        <strain>J138</strain>
    </source>
</reference>
<reference key="4">
    <citation type="submission" date="2002-05" db="EMBL/GenBank/DDBJ databases">
        <title>The genome sequence of Chlamydia pneumoniae TW183 and comparison with other Chlamydia strains based on whole genome sequence analysis.</title>
        <authorList>
            <person name="Geng M.M."/>
            <person name="Schuhmacher A."/>
            <person name="Muehldorfer I."/>
            <person name="Bensch K.W."/>
            <person name="Schaefer K.P."/>
            <person name="Schneider S."/>
            <person name="Pohl T."/>
            <person name="Essig A."/>
            <person name="Marre R."/>
            <person name="Melchers K."/>
        </authorList>
    </citation>
    <scope>NUCLEOTIDE SEQUENCE [LARGE SCALE GENOMIC DNA]</scope>
    <source>
        <strain>TW-183</strain>
    </source>
</reference>
<dbReference type="EC" id="4.3.3.7" evidence="1"/>
<dbReference type="EMBL" id="AE001363">
    <property type="protein sequence ID" value="AAD19187.1"/>
    <property type="molecule type" value="Genomic_DNA"/>
</dbReference>
<dbReference type="EMBL" id="AE002161">
    <property type="protein sequence ID" value="AAF38601.1"/>
    <property type="molecule type" value="Genomic_DNA"/>
</dbReference>
<dbReference type="EMBL" id="BA000008">
    <property type="protein sequence ID" value="BAA99257.1"/>
    <property type="molecule type" value="Genomic_DNA"/>
</dbReference>
<dbReference type="EMBL" id="AE009440">
    <property type="protein sequence ID" value="AAP99020.1"/>
    <property type="molecule type" value="Genomic_DNA"/>
</dbReference>
<dbReference type="PIR" id="A72003">
    <property type="entry name" value="A72003"/>
</dbReference>
<dbReference type="PIR" id="G86621">
    <property type="entry name" value="G86621"/>
</dbReference>
<dbReference type="RefSeq" id="NP_225244.1">
    <property type="nucleotide sequence ID" value="NC_000922.1"/>
</dbReference>
<dbReference type="RefSeq" id="WP_010883683.1">
    <property type="nucleotide sequence ID" value="NZ_LN847257.1"/>
</dbReference>
<dbReference type="SMR" id="Q9Z6K9"/>
<dbReference type="STRING" id="406984.CPK_ORF00477"/>
<dbReference type="GeneID" id="45051108"/>
<dbReference type="KEGG" id="cpa:CP_0802"/>
<dbReference type="KEGG" id="cpj:dapA"/>
<dbReference type="KEGG" id="cpn:CPn_1050"/>
<dbReference type="KEGG" id="cpt:CpB1091"/>
<dbReference type="PATRIC" id="fig|115713.3.peg.1149"/>
<dbReference type="eggNOG" id="COG0329">
    <property type="taxonomic scope" value="Bacteria"/>
</dbReference>
<dbReference type="HOGENOM" id="CLU_049343_7_0_0"/>
<dbReference type="OrthoDB" id="9782828at2"/>
<dbReference type="UniPathway" id="UPA00034">
    <property type="reaction ID" value="UER00017"/>
</dbReference>
<dbReference type="Proteomes" id="UP000000583">
    <property type="component" value="Chromosome"/>
</dbReference>
<dbReference type="Proteomes" id="UP000000801">
    <property type="component" value="Chromosome"/>
</dbReference>
<dbReference type="GO" id="GO:0005829">
    <property type="term" value="C:cytosol"/>
    <property type="evidence" value="ECO:0007669"/>
    <property type="project" value="TreeGrafter"/>
</dbReference>
<dbReference type="GO" id="GO:0008840">
    <property type="term" value="F:4-hydroxy-tetrahydrodipicolinate synthase activity"/>
    <property type="evidence" value="ECO:0007669"/>
    <property type="project" value="UniProtKB-UniRule"/>
</dbReference>
<dbReference type="GO" id="GO:0019877">
    <property type="term" value="P:diaminopimelate biosynthetic process"/>
    <property type="evidence" value="ECO:0007669"/>
    <property type="project" value="UniProtKB-UniRule"/>
</dbReference>
<dbReference type="GO" id="GO:0009089">
    <property type="term" value="P:lysine biosynthetic process via diaminopimelate"/>
    <property type="evidence" value="ECO:0007669"/>
    <property type="project" value="UniProtKB-UniRule"/>
</dbReference>
<dbReference type="Gene3D" id="3.20.20.70">
    <property type="entry name" value="Aldolase class I"/>
    <property type="match status" value="1"/>
</dbReference>
<dbReference type="HAMAP" id="MF_00418">
    <property type="entry name" value="DapA"/>
    <property type="match status" value="1"/>
</dbReference>
<dbReference type="InterPro" id="IPR013785">
    <property type="entry name" value="Aldolase_TIM"/>
</dbReference>
<dbReference type="InterPro" id="IPR005263">
    <property type="entry name" value="DapA"/>
</dbReference>
<dbReference type="InterPro" id="IPR002220">
    <property type="entry name" value="DapA-like"/>
</dbReference>
<dbReference type="InterPro" id="IPR020625">
    <property type="entry name" value="Schiff_base-form_aldolases_AS"/>
</dbReference>
<dbReference type="InterPro" id="IPR020624">
    <property type="entry name" value="Schiff_base-form_aldolases_CS"/>
</dbReference>
<dbReference type="NCBIfam" id="TIGR00674">
    <property type="entry name" value="dapA"/>
    <property type="match status" value="1"/>
</dbReference>
<dbReference type="PANTHER" id="PTHR12128:SF66">
    <property type="entry name" value="4-HYDROXY-2-OXOGLUTARATE ALDOLASE, MITOCHONDRIAL"/>
    <property type="match status" value="1"/>
</dbReference>
<dbReference type="PANTHER" id="PTHR12128">
    <property type="entry name" value="DIHYDRODIPICOLINATE SYNTHASE"/>
    <property type="match status" value="1"/>
</dbReference>
<dbReference type="Pfam" id="PF00701">
    <property type="entry name" value="DHDPS"/>
    <property type="match status" value="1"/>
</dbReference>
<dbReference type="PIRSF" id="PIRSF001365">
    <property type="entry name" value="DHDPS"/>
    <property type="match status" value="1"/>
</dbReference>
<dbReference type="PRINTS" id="PR00146">
    <property type="entry name" value="DHPICSNTHASE"/>
</dbReference>
<dbReference type="SMART" id="SM01130">
    <property type="entry name" value="DHDPS"/>
    <property type="match status" value="1"/>
</dbReference>
<dbReference type="SUPFAM" id="SSF51569">
    <property type="entry name" value="Aldolase"/>
    <property type="match status" value="1"/>
</dbReference>
<dbReference type="PROSITE" id="PS00665">
    <property type="entry name" value="DHDPS_1"/>
    <property type="match status" value="1"/>
</dbReference>
<dbReference type="PROSITE" id="PS00666">
    <property type="entry name" value="DHDPS_2"/>
    <property type="match status" value="1"/>
</dbReference>
<proteinExistence type="inferred from homology"/>